<organism>
    <name type="scientific">Burkholderia pseudomallei (strain 1710b)</name>
    <dbReference type="NCBI Taxonomy" id="320372"/>
    <lineage>
        <taxon>Bacteria</taxon>
        <taxon>Pseudomonadati</taxon>
        <taxon>Pseudomonadota</taxon>
        <taxon>Betaproteobacteria</taxon>
        <taxon>Burkholderiales</taxon>
        <taxon>Burkholderiaceae</taxon>
        <taxon>Burkholderia</taxon>
        <taxon>pseudomallei group</taxon>
    </lineage>
</organism>
<accession>Q3JQC8</accession>
<comment type="function">
    <text evidence="1">Transforms N(2)-succinylglutamate into succinate and glutamate.</text>
</comment>
<comment type="catalytic activity">
    <reaction evidence="1">
        <text>N-succinyl-L-glutamate + H2O = L-glutamate + succinate</text>
        <dbReference type="Rhea" id="RHEA:15169"/>
        <dbReference type="ChEBI" id="CHEBI:15377"/>
        <dbReference type="ChEBI" id="CHEBI:29985"/>
        <dbReference type="ChEBI" id="CHEBI:30031"/>
        <dbReference type="ChEBI" id="CHEBI:58763"/>
        <dbReference type="EC" id="3.5.1.96"/>
    </reaction>
</comment>
<comment type="cofactor">
    <cofactor evidence="1">
        <name>Zn(2+)</name>
        <dbReference type="ChEBI" id="CHEBI:29105"/>
    </cofactor>
    <text evidence="1">Binds 1 zinc ion per subunit.</text>
</comment>
<comment type="pathway">
    <text evidence="1">Amino-acid degradation; L-arginine degradation via AST pathway; L-glutamate and succinate from L-arginine: step 5/5.</text>
</comment>
<comment type="similarity">
    <text evidence="1">Belongs to the AspA/AstE family. Succinylglutamate desuccinylase subfamily.</text>
</comment>
<protein>
    <recommendedName>
        <fullName evidence="1">Succinylglutamate desuccinylase</fullName>
        <ecNumber evidence="1">3.5.1.96</ecNumber>
    </recommendedName>
</protein>
<reference key="1">
    <citation type="journal article" date="2010" name="Genome Biol. Evol.">
        <title>Continuing evolution of Burkholderia mallei through genome reduction and large-scale rearrangements.</title>
        <authorList>
            <person name="Losada L."/>
            <person name="Ronning C.M."/>
            <person name="DeShazer D."/>
            <person name="Woods D."/>
            <person name="Fedorova N."/>
            <person name="Kim H.S."/>
            <person name="Shabalina S.A."/>
            <person name="Pearson T.R."/>
            <person name="Brinkac L."/>
            <person name="Tan P."/>
            <person name="Nandi T."/>
            <person name="Crabtree J."/>
            <person name="Badger J."/>
            <person name="Beckstrom-Sternberg S."/>
            <person name="Saqib M."/>
            <person name="Schutzer S.E."/>
            <person name="Keim P."/>
            <person name="Nierman W.C."/>
        </authorList>
    </citation>
    <scope>NUCLEOTIDE SEQUENCE [LARGE SCALE GENOMIC DNA]</scope>
    <source>
        <strain>1710b</strain>
    </source>
</reference>
<evidence type="ECO:0000255" key="1">
    <source>
        <dbReference type="HAMAP-Rule" id="MF_00767"/>
    </source>
</evidence>
<feature type="chain" id="PRO_0000257707" description="Succinylglutamate desuccinylase">
    <location>
        <begin position="1"/>
        <end position="349"/>
    </location>
</feature>
<feature type="active site" evidence="1">
    <location>
        <position position="229"/>
    </location>
</feature>
<feature type="binding site" evidence="1">
    <location>
        <position position="70"/>
    </location>
    <ligand>
        <name>Zn(2+)</name>
        <dbReference type="ChEBI" id="CHEBI:29105"/>
    </ligand>
</feature>
<feature type="binding site" evidence="1">
    <location>
        <position position="73"/>
    </location>
    <ligand>
        <name>Zn(2+)</name>
        <dbReference type="ChEBI" id="CHEBI:29105"/>
    </ligand>
</feature>
<feature type="binding site" evidence="1">
    <location>
        <position position="166"/>
    </location>
    <ligand>
        <name>Zn(2+)</name>
        <dbReference type="ChEBI" id="CHEBI:29105"/>
    </ligand>
</feature>
<keyword id="KW-0056">Arginine metabolism</keyword>
<keyword id="KW-0378">Hydrolase</keyword>
<keyword id="KW-0479">Metal-binding</keyword>
<keyword id="KW-0862">Zinc</keyword>
<name>ASTE_BURP1</name>
<sequence length="349" mass="37592">MTSSADSGRDAAWLDDFLALTLAGDAPPAEAGECAARAVRWRWLGDGLLRLEPADAAQRMQSVLVSAGVHGDETAPIELLSTLVRDIARGALPLRCRLLVALGNPGAMRAGERYLDDDLNRLFGGRHAQLAASREAPRAAQLEAAAALFFSTAGRARGARWHIDMHTAIRASVFEQFALLPHTGEPPTRTMFEWLGEAQIAAVLLHTTKGSTFSHFTAQACGALACTLELGKVMPFGANDLSRFAPADAAVRRLVSGRRDAPRGALPRAFTVVDQITKQSDALELFVANDVPNFTPFARGTLLARDGDYRYAVRHEQERIVFPNPSVKPGLRAGLLVIETTRDTHAALA</sequence>
<proteinExistence type="inferred from homology"/>
<gene>
    <name evidence="1" type="primary">astE</name>
    <name type="ordered locus">BURPS1710b_2841</name>
</gene>
<dbReference type="EC" id="3.5.1.96" evidence="1"/>
<dbReference type="EMBL" id="CP000124">
    <property type="protein sequence ID" value="ABA48014.1"/>
    <property type="molecule type" value="Genomic_DNA"/>
</dbReference>
<dbReference type="RefSeq" id="WP_004524649.1">
    <property type="nucleotide sequence ID" value="NC_007434.1"/>
</dbReference>
<dbReference type="SMR" id="Q3JQC8"/>
<dbReference type="EnsemblBacteria" id="ABA48014">
    <property type="protein sequence ID" value="ABA48014"/>
    <property type="gene ID" value="BURPS1710b_2841"/>
</dbReference>
<dbReference type="GeneID" id="93060960"/>
<dbReference type="KEGG" id="bpm:BURPS1710b_2841"/>
<dbReference type="HOGENOM" id="CLU_071608_0_0_4"/>
<dbReference type="UniPathway" id="UPA00185">
    <property type="reaction ID" value="UER00283"/>
</dbReference>
<dbReference type="Proteomes" id="UP000002700">
    <property type="component" value="Chromosome I"/>
</dbReference>
<dbReference type="GO" id="GO:0016788">
    <property type="term" value="F:hydrolase activity, acting on ester bonds"/>
    <property type="evidence" value="ECO:0007669"/>
    <property type="project" value="UniProtKB-UniRule"/>
</dbReference>
<dbReference type="GO" id="GO:0009017">
    <property type="term" value="F:succinylglutamate desuccinylase activity"/>
    <property type="evidence" value="ECO:0007669"/>
    <property type="project" value="UniProtKB-EC"/>
</dbReference>
<dbReference type="GO" id="GO:0008270">
    <property type="term" value="F:zinc ion binding"/>
    <property type="evidence" value="ECO:0007669"/>
    <property type="project" value="UniProtKB-UniRule"/>
</dbReference>
<dbReference type="GO" id="GO:0019544">
    <property type="term" value="P:arginine catabolic process to glutamate"/>
    <property type="evidence" value="ECO:0007669"/>
    <property type="project" value="UniProtKB-UniRule"/>
</dbReference>
<dbReference type="GO" id="GO:0019545">
    <property type="term" value="P:arginine catabolic process to succinate"/>
    <property type="evidence" value="ECO:0007669"/>
    <property type="project" value="UniProtKB-UniRule"/>
</dbReference>
<dbReference type="CDD" id="cd03855">
    <property type="entry name" value="M14_ASTE"/>
    <property type="match status" value="1"/>
</dbReference>
<dbReference type="Gene3D" id="3.40.630.10">
    <property type="entry name" value="Zn peptidases"/>
    <property type="match status" value="1"/>
</dbReference>
<dbReference type="HAMAP" id="MF_00767">
    <property type="entry name" value="Arg_catab_AstE"/>
    <property type="match status" value="1"/>
</dbReference>
<dbReference type="InterPro" id="IPR050178">
    <property type="entry name" value="AspA/AstE_fam"/>
</dbReference>
<dbReference type="InterPro" id="IPR055438">
    <property type="entry name" value="AstE_AspA_cat"/>
</dbReference>
<dbReference type="InterPro" id="IPR007036">
    <property type="entry name" value="Aste_AspA_hybrid_dom"/>
</dbReference>
<dbReference type="InterPro" id="IPR016681">
    <property type="entry name" value="SuccinylGlu_desuccinylase"/>
</dbReference>
<dbReference type="NCBIfam" id="TIGR03242">
    <property type="entry name" value="arg_catab_astE"/>
    <property type="match status" value="1"/>
</dbReference>
<dbReference type="NCBIfam" id="NF003706">
    <property type="entry name" value="PRK05324.1"/>
    <property type="match status" value="1"/>
</dbReference>
<dbReference type="PANTHER" id="PTHR15162">
    <property type="entry name" value="ASPARTOACYLASE"/>
    <property type="match status" value="1"/>
</dbReference>
<dbReference type="PANTHER" id="PTHR15162:SF7">
    <property type="entry name" value="SUCCINYLGLUTAMATE DESUCCINYLASE"/>
    <property type="match status" value="1"/>
</dbReference>
<dbReference type="Pfam" id="PF24827">
    <property type="entry name" value="AstE_AspA_cat"/>
    <property type="match status" value="1"/>
</dbReference>
<dbReference type="Pfam" id="PF04952">
    <property type="entry name" value="AstE_AspA_hybrid"/>
    <property type="match status" value="1"/>
</dbReference>
<dbReference type="PIRSF" id="PIRSF017020">
    <property type="entry name" value="AstE"/>
    <property type="match status" value="1"/>
</dbReference>
<dbReference type="SUPFAM" id="SSF53187">
    <property type="entry name" value="Zn-dependent exopeptidases"/>
    <property type="match status" value="1"/>
</dbReference>